<sequence>MSDILNKILAVKADEVAAAKKYRSLASLRSEVEADKDARAALRNFEGALRQKIAAGNAGIIAEIKKASPSKGIIRPDFQPDQIATSYAQHGAACLSVLTDVQFFQGSPDYLKQARAACSLPVLRKDFMIDPYQIYEARSWGADCILLIVAGLDHGLMAELEACAHELGMHVLVEVHNGEELNAALRLKTTLLGVNNRNLRTFETSLQTTLDLLPRIPPEKLVITESAIVTPDDVKKMRDADVHAFLIGETFMRAPDPGQELNRLFS</sequence>
<proteinExistence type="inferred from homology"/>
<keyword id="KW-0028">Amino-acid biosynthesis</keyword>
<keyword id="KW-0057">Aromatic amino acid biosynthesis</keyword>
<keyword id="KW-0210">Decarboxylase</keyword>
<keyword id="KW-0456">Lyase</keyword>
<keyword id="KW-1185">Reference proteome</keyword>
<keyword id="KW-0822">Tryptophan biosynthesis</keyword>
<gene>
    <name evidence="1" type="primary">trpC</name>
    <name type="ordered locus">HEAR0197</name>
</gene>
<name>TRPC_HERAR</name>
<evidence type="ECO:0000255" key="1">
    <source>
        <dbReference type="HAMAP-Rule" id="MF_00134"/>
    </source>
</evidence>
<dbReference type="EC" id="4.1.1.48" evidence="1"/>
<dbReference type="EMBL" id="CU207211">
    <property type="protein sequence ID" value="CAL60431.1"/>
    <property type="molecule type" value="Genomic_DNA"/>
</dbReference>
<dbReference type="SMR" id="A4G1P4"/>
<dbReference type="STRING" id="204773.HEAR0197"/>
<dbReference type="KEGG" id="har:HEAR0197"/>
<dbReference type="eggNOG" id="COG0134">
    <property type="taxonomic scope" value="Bacteria"/>
</dbReference>
<dbReference type="HOGENOM" id="CLU_034247_2_0_4"/>
<dbReference type="OrthoDB" id="9804217at2"/>
<dbReference type="UniPathway" id="UPA00035">
    <property type="reaction ID" value="UER00043"/>
</dbReference>
<dbReference type="Proteomes" id="UP000006697">
    <property type="component" value="Chromosome"/>
</dbReference>
<dbReference type="GO" id="GO:0004425">
    <property type="term" value="F:indole-3-glycerol-phosphate synthase activity"/>
    <property type="evidence" value="ECO:0007669"/>
    <property type="project" value="UniProtKB-UniRule"/>
</dbReference>
<dbReference type="GO" id="GO:0004640">
    <property type="term" value="F:phosphoribosylanthranilate isomerase activity"/>
    <property type="evidence" value="ECO:0007669"/>
    <property type="project" value="TreeGrafter"/>
</dbReference>
<dbReference type="GO" id="GO:0000162">
    <property type="term" value="P:L-tryptophan biosynthetic process"/>
    <property type="evidence" value="ECO:0007669"/>
    <property type="project" value="UniProtKB-UniRule"/>
</dbReference>
<dbReference type="CDD" id="cd00331">
    <property type="entry name" value="IGPS"/>
    <property type="match status" value="1"/>
</dbReference>
<dbReference type="FunFam" id="3.20.20.70:FF:000024">
    <property type="entry name" value="Indole-3-glycerol phosphate synthase"/>
    <property type="match status" value="1"/>
</dbReference>
<dbReference type="Gene3D" id="3.20.20.70">
    <property type="entry name" value="Aldolase class I"/>
    <property type="match status" value="1"/>
</dbReference>
<dbReference type="HAMAP" id="MF_00134_B">
    <property type="entry name" value="IGPS_B"/>
    <property type="match status" value="1"/>
</dbReference>
<dbReference type="InterPro" id="IPR013785">
    <property type="entry name" value="Aldolase_TIM"/>
</dbReference>
<dbReference type="InterPro" id="IPR045186">
    <property type="entry name" value="Indole-3-glycerol_P_synth"/>
</dbReference>
<dbReference type="InterPro" id="IPR013798">
    <property type="entry name" value="Indole-3-glycerol_P_synth_dom"/>
</dbReference>
<dbReference type="InterPro" id="IPR001468">
    <property type="entry name" value="Indole-3-GlycerolPSynthase_CS"/>
</dbReference>
<dbReference type="InterPro" id="IPR011060">
    <property type="entry name" value="RibuloseP-bd_barrel"/>
</dbReference>
<dbReference type="NCBIfam" id="NF001370">
    <property type="entry name" value="PRK00278.1-2"/>
    <property type="match status" value="1"/>
</dbReference>
<dbReference type="NCBIfam" id="NF001373">
    <property type="entry name" value="PRK00278.1-6"/>
    <property type="match status" value="1"/>
</dbReference>
<dbReference type="NCBIfam" id="NF001377">
    <property type="entry name" value="PRK00278.2-4"/>
    <property type="match status" value="1"/>
</dbReference>
<dbReference type="PANTHER" id="PTHR22854:SF2">
    <property type="entry name" value="INDOLE-3-GLYCEROL-PHOSPHATE SYNTHASE"/>
    <property type="match status" value="1"/>
</dbReference>
<dbReference type="PANTHER" id="PTHR22854">
    <property type="entry name" value="TRYPTOPHAN BIOSYNTHESIS PROTEIN"/>
    <property type="match status" value="1"/>
</dbReference>
<dbReference type="Pfam" id="PF00218">
    <property type="entry name" value="IGPS"/>
    <property type="match status" value="1"/>
</dbReference>
<dbReference type="SUPFAM" id="SSF51366">
    <property type="entry name" value="Ribulose-phoshate binding barrel"/>
    <property type="match status" value="1"/>
</dbReference>
<dbReference type="PROSITE" id="PS00614">
    <property type="entry name" value="IGPS"/>
    <property type="match status" value="1"/>
</dbReference>
<reference key="1">
    <citation type="journal article" date="2007" name="PLoS Genet.">
        <title>A tale of two oxidation states: bacterial colonization of arsenic-rich environments.</title>
        <authorList>
            <person name="Muller D."/>
            <person name="Medigue C."/>
            <person name="Koechler S."/>
            <person name="Barbe V."/>
            <person name="Barakat M."/>
            <person name="Talla E."/>
            <person name="Bonnefoy V."/>
            <person name="Krin E."/>
            <person name="Arsene-Ploetze F."/>
            <person name="Carapito C."/>
            <person name="Chandler M."/>
            <person name="Cournoyer B."/>
            <person name="Cruveiller S."/>
            <person name="Dossat C."/>
            <person name="Duval S."/>
            <person name="Heymann M."/>
            <person name="Leize E."/>
            <person name="Lieutaud A."/>
            <person name="Lievremont D."/>
            <person name="Makita Y."/>
            <person name="Mangenot S."/>
            <person name="Nitschke W."/>
            <person name="Ortet P."/>
            <person name="Perdrial N."/>
            <person name="Schoepp B."/>
            <person name="Siguier P."/>
            <person name="Simeonova D.D."/>
            <person name="Rouy Z."/>
            <person name="Segurens B."/>
            <person name="Turlin E."/>
            <person name="Vallenet D."/>
            <person name="van Dorsselaer A."/>
            <person name="Weiss S."/>
            <person name="Weissenbach J."/>
            <person name="Lett M.-C."/>
            <person name="Danchin A."/>
            <person name="Bertin P.N."/>
        </authorList>
    </citation>
    <scope>NUCLEOTIDE SEQUENCE [LARGE SCALE GENOMIC DNA]</scope>
    <source>
        <strain>ULPAs1</strain>
    </source>
</reference>
<protein>
    <recommendedName>
        <fullName evidence="1">Indole-3-glycerol phosphate synthase</fullName>
        <shortName evidence="1">IGPS</shortName>
        <ecNumber evidence="1">4.1.1.48</ecNumber>
    </recommendedName>
</protein>
<organism>
    <name type="scientific">Herminiimonas arsenicoxydans</name>
    <dbReference type="NCBI Taxonomy" id="204773"/>
    <lineage>
        <taxon>Bacteria</taxon>
        <taxon>Pseudomonadati</taxon>
        <taxon>Pseudomonadota</taxon>
        <taxon>Betaproteobacteria</taxon>
        <taxon>Burkholderiales</taxon>
        <taxon>Oxalobacteraceae</taxon>
        <taxon>Herminiimonas</taxon>
    </lineage>
</organism>
<feature type="chain" id="PRO_1000018484" description="Indole-3-glycerol phosphate synthase">
    <location>
        <begin position="1"/>
        <end position="266"/>
    </location>
</feature>
<accession>A4G1P4</accession>
<comment type="catalytic activity">
    <reaction evidence="1">
        <text>1-(2-carboxyphenylamino)-1-deoxy-D-ribulose 5-phosphate + H(+) = (1S,2R)-1-C-(indol-3-yl)glycerol 3-phosphate + CO2 + H2O</text>
        <dbReference type="Rhea" id="RHEA:23476"/>
        <dbReference type="ChEBI" id="CHEBI:15377"/>
        <dbReference type="ChEBI" id="CHEBI:15378"/>
        <dbReference type="ChEBI" id="CHEBI:16526"/>
        <dbReference type="ChEBI" id="CHEBI:58613"/>
        <dbReference type="ChEBI" id="CHEBI:58866"/>
        <dbReference type="EC" id="4.1.1.48"/>
    </reaction>
</comment>
<comment type="pathway">
    <text evidence="1">Amino-acid biosynthesis; L-tryptophan biosynthesis; L-tryptophan from chorismate: step 4/5.</text>
</comment>
<comment type="similarity">
    <text evidence="1">Belongs to the TrpC family.</text>
</comment>